<name>G3P_NEUCR</name>
<feature type="chain" id="PRO_0000145563" description="Glyceraldehyde-3-phosphate dehydrogenase">
    <location>
        <begin position="1"/>
        <end position="338"/>
    </location>
</feature>
<feature type="active site" description="Nucleophile" evidence="2">
    <location>
        <position position="151"/>
    </location>
</feature>
<feature type="binding site" evidence="1">
    <location>
        <begin position="12"/>
        <end position="13"/>
    </location>
    <ligand>
        <name>NAD(+)</name>
        <dbReference type="ChEBI" id="CHEBI:57540"/>
    </ligand>
</feature>
<feature type="binding site" evidence="1">
    <location>
        <position position="34"/>
    </location>
    <ligand>
        <name>NAD(+)</name>
        <dbReference type="ChEBI" id="CHEBI:57540"/>
    </ligand>
</feature>
<feature type="binding site" evidence="1">
    <location>
        <position position="79"/>
    </location>
    <ligand>
        <name>NAD(+)</name>
        <dbReference type="ChEBI" id="CHEBI:57540"/>
    </ligand>
</feature>
<feature type="binding site" evidence="1">
    <location>
        <begin position="150"/>
        <end position="152"/>
    </location>
    <ligand>
        <name>D-glyceraldehyde 3-phosphate</name>
        <dbReference type="ChEBI" id="CHEBI:59776"/>
    </ligand>
</feature>
<feature type="binding site" evidence="1">
    <location>
        <position position="181"/>
    </location>
    <ligand>
        <name>D-glyceraldehyde 3-phosphate</name>
        <dbReference type="ChEBI" id="CHEBI:59776"/>
    </ligand>
</feature>
<feature type="binding site" evidence="1">
    <location>
        <begin position="210"/>
        <end position="211"/>
    </location>
    <ligand>
        <name>D-glyceraldehyde 3-phosphate</name>
        <dbReference type="ChEBI" id="CHEBI:59776"/>
    </ligand>
</feature>
<feature type="binding site" evidence="1">
    <location>
        <position position="233"/>
    </location>
    <ligand>
        <name>D-glyceraldehyde 3-phosphate</name>
        <dbReference type="ChEBI" id="CHEBI:59776"/>
    </ligand>
</feature>
<feature type="binding site" evidence="1">
    <location>
        <position position="315"/>
    </location>
    <ligand>
        <name>NAD(+)</name>
        <dbReference type="ChEBI" id="CHEBI:57540"/>
    </ligand>
</feature>
<feature type="site" description="Activates thiol group during catalysis" evidence="1">
    <location>
        <position position="178"/>
    </location>
</feature>
<feature type="sequence conflict" description="In Ref. 1; AAB00570." evidence="3" ref="1">
    <original>ER</original>
    <variation>DA</variation>
    <location>
        <begin position="78"/>
        <end position="79"/>
    </location>
</feature>
<feature type="sequence conflict" description="In Ref. 2; AAB95425." evidence="3" ref="2">
    <original>A</original>
    <variation>S</variation>
    <location>
        <position position="212"/>
    </location>
</feature>
<keyword id="KW-0963">Cytoplasm</keyword>
<keyword id="KW-0324">Glycolysis</keyword>
<keyword id="KW-0520">NAD</keyword>
<keyword id="KW-0560">Oxidoreductase</keyword>
<keyword id="KW-1185">Reference proteome</keyword>
<reference key="1">
    <citation type="journal article" date="1997" name="Fungal Genet. Newsl.">
        <title>Identification and cloning of the Neurospora crassa glyceraldehyde-3-phosphate dehydrogenase gene, gpd-1.</title>
        <authorList>
            <person name="Sahni M."/>
            <person name="Kinsey J.A."/>
        </authorList>
    </citation>
    <scope>NUCLEOTIDE SEQUENCE [MRNA]</scope>
</reference>
<reference key="2">
    <citation type="journal article" date="1998" name="J. Biol. Chem.">
        <title>Glyceraldehyde-3-phosphate dehydrogenase is regulated on a daily basis by the circadian clock.</title>
        <authorList>
            <person name="Shinohara M.L."/>
            <person name="Loros J.J."/>
            <person name="Dunlap J.C."/>
        </authorList>
    </citation>
    <scope>NUCLEOTIDE SEQUENCE [GENOMIC DNA]</scope>
</reference>
<reference key="3">
    <citation type="journal article" date="2003" name="Nucleic Acids Res.">
        <title>What's in the genome of a filamentous fungus? Analysis of the Neurospora genome sequence.</title>
        <authorList>
            <person name="Mannhaupt G."/>
            <person name="Montrone C."/>
            <person name="Haase D."/>
            <person name="Mewes H.-W."/>
            <person name="Aign V."/>
            <person name="Hoheisel J.D."/>
            <person name="Fartmann B."/>
            <person name="Nyakatura G."/>
            <person name="Kempken F."/>
            <person name="Maier J."/>
            <person name="Schulte U."/>
        </authorList>
    </citation>
    <scope>NUCLEOTIDE SEQUENCE [LARGE SCALE GENOMIC DNA]</scope>
    <source>
        <strain>ATCC 24698 / 74-OR23-1A / CBS 708.71 / DSM 1257 / FGSC 987</strain>
    </source>
</reference>
<reference key="4">
    <citation type="journal article" date="2003" name="Nature">
        <title>The genome sequence of the filamentous fungus Neurospora crassa.</title>
        <authorList>
            <person name="Galagan J.E."/>
            <person name="Calvo S.E."/>
            <person name="Borkovich K.A."/>
            <person name="Selker E.U."/>
            <person name="Read N.D."/>
            <person name="Jaffe D.B."/>
            <person name="FitzHugh W."/>
            <person name="Ma L.-J."/>
            <person name="Smirnov S."/>
            <person name="Purcell S."/>
            <person name="Rehman B."/>
            <person name="Elkins T."/>
            <person name="Engels R."/>
            <person name="Wang S."/>
            <person name="Nielsen C.B."/>
            <person name="Butler J."/>
            <person name="Endrizzi M."/>
            <person name="Qui D."/>
            <person name="Ianakiev P."/>
            <person name="Bell-Pedersen D."/>
            <person name="Nelson M.A."/>
            <person name="Werner-Washburne M."/>
            <person name="Selitrennikoff C.P."/>
            <person name="Kinsey J.A."/>
            <person name="Braun E.L."/>
            <person name="Zelter A."/>
            <person name="Schulte U."/>
            <person name="Kothe G.O."/>
            <person name="Jedd G."/>
            <person name="Mewes H.-W."/>
            <person name="Staben C."/>
            <person name="Marcotte E."/>
            <person name="Greenberg D."/>
            <person name="Roy A."/>
            <person name="Foley K."/>
            <person name="Naylor J."/>
            <person name="Stange-Thomann N."/>
            <person name="Barrett R."/>
            <person name="Gnerre S."/>
            <person name="Kamal M."/>
            <person name="Kamvysselis M."/>
            <person name="Mauceli E.W."/>
            <person name="Bielke C."/>
            <person name="Rudd S."/>
            <person name="Frishman D."/>
            <person name="Krystofova S."/>
            <person name="Rasmussen C."/>
            <person name="Metzenberg R.L."/>
            <person name="Perkins D.D."/>
            <person name="Kroken S."/>
            <person name="Cogoni C."/>
            <person name="Macino G."/>
            <person name="Catcheside D.E.A."/>
            <person name="Li W."/>
            <person name="Pratt R.J."/>
            <person name="Osmani S.A."/>
            <person name="DeSouza C.P.C."/>
            <person name="Glass N.L."/>
            <person name="Orbach M.J."/>
            <person name="Berglund J.A."/>
            <person name="Voelker R."/>
            <person name="Yarden O."/>
            <person name="Plamann M."/>
            <person name="Seiler S."/>
            <person name="Dunlap J.C."/>
            <person name="Radford A."/>
            <person name="Aramayo R."/>
            <person name="Natvig D.O."/>
            <person name="Alex L.A."/>
            <person name="Mannhaupt G."/>
            <person name="Ebbole D.J."/>
            <person name="Freitag M."/>
            <person name="Paulsen I."/>
            <person name="Sachs M.S."/>
            <person name="Lander E.S."/>
            <person name="Nusbaum C."/>
            <person name="Birren B.W."/>
        </authorList>
    </citation>
    <scope>NUCLEOTIDE SEQUENCE [LARGE SCALE GENOMIC DNA]</scope>
    <source>
        <strain>ATCC 24698 / 74-OR23-1A / CBS 708.71 / DSM 1257 / FGSC 987</strain>
    </source>
</reference>
<sequence>MVVKVGINGFGRIGRIVFRNAIEHDDIHIVAVNDPFIEPKYAAYMLRYDTTHGNFKGTIEVDGADLVVNGKKVKFYTERDPAAIPWSETGADYIVESTGVFTTTEKASAHLKGGAKKVIISAPSADAPMYVMGVNNETYDGSADVISNASCTTNCLAPLAKVIHDNFTIVEGLMTTVHSYTATQKTVDGPSAKDWRGGRTAAQNIIPSSTGAAKAVGKVIPDLNGKLTGMAMRVPTANVSVVDLTARIEKGATYDEIKEVIKKASEGPLAGILAYTEDEVVSSDMNGNPASSIFDAKAGISLNKNFVKLVSWYDNEWGYSRRVLDLISYISKVDAKKA</sequence>
<proteinExistence type="evidence at transcript level"/>
<accession>P54118</accession>
<accession>Q7RV61</accession>
<accession>Q8WZR2</accession>
<accession>Q92255</accession>
<dbReference type="EC" id="1.2.1.12"/>
<dbReference type="EMBL" id="U56397">
    <property type="protein sequence ID" value="AAB00570.1"/>
    <property type="molecule type" value="mRNA"/>
</dbReference>
<dbReference type="EMBL" id="U67457">
    <property type="protein sequence ID" value="AAB95425.1"/>
    <property type="molecule type" value="Genomic_DNA"/>
</dbReference>
<dbReference type="EMBL" id="AL670003">
    <property type="protein sequence ID" value="CAD21242.1"/>
    <property type="molecule type" value="Genomic_DNA"/>
</dbReference>
<dbReference type="EMBL" id="CM002237">
    <property type="protein sequence ID" value="EAA27741.1"/>
    <property type="molecule type" value="Genomic_DNA"/>
</dbReference>
<dbReference type="PIR" id="T47218">
    <property type="entry name" value="T47218"/>
</dbReference>
<dbReference type="RefSeq" id="XP_956977.1">
    <property type="nucleotide sequence ID" value="XM_951884.3"/>
</dbReference>
<dbReference type="SMR" id="P54118"/>
<dbReference type="FunCoup" id="P54118">
    <property type="interactions" value="1092"/>
</dbReference>
<dbReference type="STRING" id="367110.P54118"/>
<dbReference type="PaxDb" id="5141-EFNCRP00000001688"/>
<dbReference type="EnsemblFungi" id="EAA27741">
    <property type="protein sequence ID" value="EAA27741"/>
    <property type="gene ID" value="NCU01528"/>
</dbReference>
<dbReference type="GeneID" id="3873099"/>
<dbReference type="KEGG" id="ncr:NCU01528"/>
<dbReference type="VEuPathDB" id="FungiDB:NCU01528"/>
<dbReference type="HOGENOM" id="CLU_030140_0_1_1"/>
<dbReference type="InParanoid" id="P54118"/>
<dbReference type="OrthoDB" id="1152826at2759"/>
<dbReference type="UniPathway" id="UPA00109">
    <property type="reaction ID" value="UER00184"/>
</dbReference>
<dbReference type="Proteomes" id="UP000001805">
    <property type="component" value="Chromosome 6, Linkage Group II"/>
</dbReference>
<dbReference type="GO" id="GO:0005829">
    <property type="term" value="C:cytosol"/>
    <property type="evidence" value="ECO:0000318"/>
    <property type="project" value="GO_Central"/>
</dbReference>
<dbReference type="GO" id="GO:0004365">
    <property type="term" value="F:glyceraldehyde-3-phosphate dehydrogenase (NAD+) (phosphorylating) activity"/>
    <property type="evidence" value="ECO:0000318"/>
    <property type="project" value="GO_Central"/>
</dbReference>
<dbReference type="GO" id="GO:0051287">
    <property type="term" value="F:NAD binding"/>
    <property type="evidence" value="ECO:0007669"/>
    <property type="project" value="InterPro"/>
</dbReference>
<dbReference type="GO" id="GO:0050661">
    <property type="term" value="F:NADP binding"/>
    <property type="evidence" value="ECO:0007669"/>
    <property type="project" value="InterPro"/>
</dbReference>
<dbReference type="GO" id="GO:0006006">
    <property type="term" value="P:glucose metabolic process"/>
    <property type="evidence" value="ECO:0007669"/>
    <property type="project" value="InterPro"/>
</dbReference>
<dbReference type="GO" id="GO:0006096">
    <property type="term" value="P:glycolytic process"/>
    <property type="evidence" value="ECO:0000318"/>
    <property type="project" value="GO_Central"/>
</dbReference>
<dbReference type="CDD" id="cd18126">
    <property type="entry name" value="GAPDH_I_C"/>
    <property type="match status" value="1"/>
</dbReference>
<dbReference type="CDD" id="cd05214">
    <property type="entry name" value="GAPDH_I_N"/>
    <property type="match status" value="1"/>
</dbReference>
<dbReference type="FunFam" id="3.30.360.10:FF:000001">
    <property type="entry name" value="Glyceraldehyde-3-phosphate dehydrogenase"/>
    <property type="match status" value="1"/>
</dbReference>
<dbReference type="FunFam" id="3.40.50.720:FF:000020">
    <property type="entry name" value="Glyceraldehyde-3-phosphate dehydrogenase"/>
    <property type="match status" value="1"/>
</dbReference>
<dbReference type="Gene3D" id="3.30.360.10">
    <property type="entry name" value="Dihydrodipicolinate Reductase, domain 2"/>
    <property type="match status" value="1"/>
</dbReference>
<dbReference type="Gene3D" id="3.40.50.720">
    <property type="entry name" value="NAD(P)-binding Rossmann-like Domain"/>
    <property type="match status" value="1"/>
</dbReference>
<dbReference type="InterPro" id="IPR020831">
    <property type="entry name" value="GlycerAld/Erythrose_P_DH"/>
</dbReference>
<dbReference type="InterPro" id="IPR020830">
    <property type="entry name" value="GlycerAld_3-P_DH_AS"/>
</dbReference>
<dbReference type="InterPro" id="IPR020829">
    <property type="entry name" value="GlycerAld_3-P_DH_cat"/>
</dbReference>
<dbReference type="InterPro" id="IPR020828">
    <property type="entry name" value="GlycerAld_3-P_DH_NAD(P)-bd"/>
</dbReference>
<dbReference type="InterPro" id="IPR006424">
    <property type="entry name" value="Glyceraldehyde-3-P_DH_1"/>
</dbReference>
<dbReference type="InterPro" id="IPR036291">
    <property type="entry name" value="NAD(P)-bd_dom_sf"/>
</dbReference>
<dbReference type="NCBIfam" id="TIGR01534">
    <property type="entry name" value="GAPDH-I"/>
    <property type="match status" value="1"/>
</dbReference>
<dbReference type="PANTHER" id="PTHR10836">
    <property type="entry name" value="GLYCERALDEHYDE 3-PHOSPHATE DEHYDROGENASE"/>
    <property type="match status" value="1"/>
</dbReference>
<dbReference type="PANTHER" id="PTHR10836:SF76">
    <property type="entry name" value="GLYCERALDEHYDE-3-PHOSPHATE DEHYDROGENASE-RELATED"/>
    <property type="match status" value="1"/>
</dbReference>
<dbReference type="Pfam" id="PF02800">
    <property type="entry name" value="Gp_dh_C"/>
    <property type="match status" value="1"/>
</dbReference>
<dbReference type="Pfam" id="PF00044">
    <property type="entry name" value="Gp_dh_N"/>
    <property type="match status" value="1"/>
</dbReference>
<dbReference type="PIRSF" id="PIRSF000149">
    <property type="entry name" value="GAP_DH"/>
    <property type="match status" value="1"/>
</dbReference>
<dbReference type="PRINTS" id="PR00078">
    <property type="entry name" value="G3PDHDRGNASE"/>
</dbReference>
<dbReference type="SMART" id="SM00846">
    <property type="entry name" value="Gp_dh_N"/>
    <property type="match status" value="1"/>
</dbReference>
<dbReference type="SUPFAM" id="SSF55347">
    <property type="entry name" value="Glyceraldehyde-3-phosphate dehydrogenase-like, C-terminal domain"/>
    <property type="match status" value="1"/>
</dbReference>
<dbReference type="SUPFAM" id="SSF51735">
    <property type="entry name" value="NAD(P)-binding Rossmann-fold domains"/>
    <property type="match status" value="1"/>
</dbReference>
<dbReference type="PROSITE" id="PS00071">
    <property type="entry name" value="GAPDH"/>
    <property type="match status" value="1"/>
</dbReference>
<gene>
    <name type="primary">gpd-1</name>
    <name type="synonym">ccg-7</name>
    <name type="ORF">B9G16.70</name>
    <name type="ORF">NCU01528</name>
</gene>
<protein>
    <recommendedName>
        <fullName>Glyceraldehyde-3-phosphate dehydrogenase</fullName>
        <shortName>GAPDH</shortName>
        <ecNumber>1.2.1.12</ecNumber>
    </recommendedName>
    <alternativeName>
        <fullName>Clock-controlled protein 7</fullName>
    </alternativeName>
</protein>
<evidence type="ECO:0000250" key="1"/>
<evidence type="ECO:0000255" key="2">
    <source>
        <dbReference type="PROSITE-ProRule" id="PRU10009"/>
    </source>
</evidence>
<evidence type="ECO:0000305" key="3"/>
<comment type="catalytic activity">
    <reaction evidence="2">
        <text>D-glyceraldehyde 3-phosphate + phosphate + NAD(+) = (2R)-3-phospho-glyceroyl phosphate + NADH + H(+)</text>
        <dbReference type="Rhea" id="RHEA:10300"/>
        <dbReference type="ChEBI" id="CHEBI:15378"/>
        <dbReference type="ChEBI" id="CHEBI:43474"/>
        <dbReference type="ChEBI" id="CHEBI:57540"/>
        <dbReference type="ChEBI" id="CHEBI:57604"/>
        <dbReference type="ChEBI" id="CHEBI:57945"/>
        <dbReference type="ChEBI" id="CHEBI:59776"/>
        <dbReference type="EC" id="1.2.1.12"/>
    </reaction>
</comment>
<comment type="pathway">
    <text>Carbohydrate degradation; glycolysis; pyruvate from D-glyceraldehyde 3-phosphate: step 1/5.</text>
</comment>
<comment type="subunit">
    <text evidence="1">Homotetramer.</text>
</comment>
<comment type="subcellular location">
    <subcellularLocation>
        <location>Cytoplasm</location>
    </subcellularLocation>
</comment>
<comment type="developmental stage">
    <text>Clock-regulated. The peak of GAPDH activity lags several hours behind the peak in mRNA accumulation in the late night.</text>
</comment>
<comment type="similarity">
    <text evidence="3">Belongs to the glyceraldehyde-3-phosphate dehydrogenase family.</text>
</comment>
<organism>
    <name type="scientific">Neurospora crassa (strain ATCC 24698 / 74-OR23-1A / CBS 708.71 / DSM 1257 / FGSC 987)</name>
    <dbReference type="NCBI Taxonomy" id="367110"/>
    <lineage>
        <taxon>Eukaryota</taxon>
        <taxon>Fungi</taxon>
        <taxon>Dikarya</taxon>
        <taxon>Ascomycota</taxon>
        <taxon>Pezizomycotina</taxon>
        <taxon>Sordariomycetes</taxon>
        <taxon>Sordariomycetidae</taxon>
        <taxon>Sordariales</taxon>
        <taxon>Sordariaceae</taxon>
        <taxon>Neurospora</taxon>
    </lineage>
</organism>